<protein>
    <recommendedName>
        <fullName>Pre-mRNA-splicing factor cwf22</fullName>
    </recommendedName>
    <alternativeName>
        <fullName>Complexed with cdc5 protein 22</fullName>
    </alternativeName>
</protein>
<comment type="function">
    <text>May be involved in pre-mRNA splicing.</text>
</comment>
<comment type="subunit">
    <text evidence="4">Belongs to the 40S cdc5-associated complex (or cwf complex), a spliceosome sub-complex reminiscent of a late-stage spliceosome composed of the U2, U5 and U6 snRNAs and at least brr2, cdc5, cwf2/prp3, cwf3/syf1, cwf4/syf3, cwf5/ecm2, spp42/cwf6, cwf7/spf27, cwf8, cwf9, cwf10, cwf11, cwf12, prp45/cwf13, cwf14, cwf15, cwf16, cwf17, cwf18, cwf19, cwf20, cwf21, cwf22, cwf23, cwf24, cwf25, cwf26, cyp7/cwf27, cwf28, cwf29/ist3, lea1, msl1, prp5/cwf1, prp10, prp12/sap130, prp17, prp22, sap61, sap62, sap114, sap145, slu7, smb1, smd1, smd3, smf1, smg1 and syf2.</text>
</comment>
<comment type="subcellular location">
    <subcellularLocation>
        <location evidence="1">Cytoplasm</location>
    </subcellularLocation>
    <subcellularLocation>
        <location evidence="1">Nucleus</location>
    </subcellularLocation>
</comment>
<comment type="similarity">
    <text evidence="6">Belongs to the CWC22 family.</text>
</comment>
<comment type="sequence caution" evidence="6">
    <conflict type="frameshift">
        <sequence resource="EMBL-CDS" id="CAA20491"/>
    </conflict>
</comment>
<feature type="chain" id="PRO_0000215675" description="Pre-mRNA-splicing factor cwf22">
    <location>
        <begin position="1"/>
        <end position="887"/>
    </location>
</feature>
<feature type="domain" description="MIF4G" evidence="2">
    <location>
        <begin position="124"/>
        <end position="307"/>
    </location>
</feature>
<feature type="domain" description="MI" evidence="2">
    <location>
        <begin position="411"/>
        <end position="527"/>
    </location>
</feature>
<feature type="region of interest" description="Disordered" evidence="3">
    <location>
        <begin position="1"/>
        <end position="27"/>
    </location>
</feature>
<feature type="region of interest" description="Disordered" evidence="3">
    <location>
        <begin position="366"/>
        <end position="401"/>
    </location>
</feature>
<feature type="region of interest" description="Disordered" evidence="3">
    <location>
        <begin position="607"/>
        <end position="834"/>
    </location>
</feature>
<feature type="region of interest" description="Disordered" evidence="3">
    <location>
        <begin position="867"/>
        <end position="887"/>
    </location>
</feature>
<feature type="compositionally biased region" description="Acidic residues" evidence="3">
    <location>
        <begin position="368"/>
        <end position="394"/>
    </location>
</feature>
<feature type="compositionally biased region" description="Low complexity" evidence="3">
    <location>
        <begin position="618"/>
        <end position="662"/>
    </location>
</feature>
<feature type="compositionally biased region" description="Basic and acidic residues" evidence="3">
    <location>
        <begin position="677"/>
        <end position="690"/>
    </location>
</feature>
<feature type="compositionally biased region" description="Low complexity" evidence="3">
    <location>
        <begin position="691"/>
        <end position="712"/>
    </location>
</feature>
<feature type="compositionally biased region" description="Basic and acidic residues" evidence="3">
    <location>
        <begin position="717"/>
        <end position="726"/>
    </location>
</feature>
<feature type="compositionally biased region" description="Basic residues" evidence="3">
    <location>
        <begin position="736"/>
        <end position="746"/>
    </location>
</feature>
<feature type="compositionally biased region" description="Low complexity" evidence="3">
    <location>
        <begin position="747"/>
        <end position="762"/>
    </location>
</feature>
<feature type="compositionally biased region" description="Low complexity" evidence="3">
    <location>
        <begin position="769"/>
        <end position="791"/>
    </location>
</feature>
<feature type="compositionally biased region" description="Polar residues" evidence="3">
    <location>
        <begin position="799"/>
        <end position="809"/>
    </location>
</feature>
<feature type="modified residue" description="Phosphoserine" evidence="5">
    <location>
        <position position="662"/>
    </location>
</feature>
<feature type="modified residue" description="Phosphothreonine" evidence="5">
    <location>
        <position position="664"/>
    </location>
</feature>
<feature type="sequence conflict" description="In Ref. 3; BAA13763." evidence="6" ref="3">
    <original>A</original>
    <variation>G</variation>
    <location>
        <position position="783"/>
    </location>
</feature>
<feature type="helix" evidence="8">
    <location>
        <begin position="405"/>
        <end position="421"/>
    </location>
</feature>
<feature type="helix" evidence="8">
    <location>
        <begin position="426"/>
        <end position="435"/>
    </location>
</feature>
<feature type="helix" evidence="8">
    <location>
        <begin position="443"/>
        <end position="456"/>
    </location>
</feature>
<feature type="strand" evidence="8">
    <location>
        <begin position="457"/>
        <end position="459"/>
    </location>
</feature>
<feature type="helix" evidence="8">
    <location>
        <begin position="462"/>
        <end position="474"/>
    </location>
</feature>
<feature type="helix" evidence="8">
    <location>
        <begin position="477"/>
        <end position="491"/>
    </location>
</feature>
<feature type="helix" evidence="8">
    <location>
        <begin position="498"/>
        <end position="513"/>
    </location>
</feature>
<feature type="helix" evidence="8">
    <location>
        <begin position="519"/>
        <end position="524"/>
    </location>
</feature>
<feature type="helix" evidence="7">
    <location>
        <begin position="529"/>
        <end position="531"/>
    </location>
</feature>
<feature type="helix" evidence="8">
    <location>
        <begin position="534"/>
        <end position="551"/>
    </location>
</feature>
<feature type="helix" evidence="8">
    <location>
        <begin position="555"/>
        <end position="561"/>
    </location>
</feature>
<feature type="turn" evidence="8">
    <location>
        <begin position="570"/>
        <end position="574"/>
    </location>
</feature>
<feature type="helix" evidence="8">
    <location>
        <begin position="580"/>
        <end position="590"/>
    </location>
</feature>
<feature type="helix" evidence="8">
    <location>
        <begin position="595"/>
        <end position="597"/>
    </location>
</feature>
<feature type="helix" evidence="8">
    <location>
        <begin position="598"/>
        <end position="606"/>
    </location>
</feature>
<gene>
    <name type="primary">cwf22</name>
    <name type="ORF">SPBC13E7.01</name>
    <name type="ORF">SPBC15D4.16</name>
</gene>
<accession>Q9P6R9</accession>
<accession>O74321</accession>
<accession>P78752</accession>
<sequence>MEKEDKSFGIGMLDYNRENPESSGHSRVAVIRKQKTEQENNNLSWEDRHYIPDLHKSNKIKTPTSLADEKKSHNELDPKAQIKKLMETRSGGTYIPPAKLKALQAQLTDVNTPEYQRMQWEALKKSINGLINKVNKSNIRDIIPELFQENIIRGRALYCRSIMKAQAASLPFTPIYAAMTAVINTKFPQIGELLLTRLIVQFRKSFQRNDKSMCISSSSFIAHLINQKIAHEIVGLQILAVLLERPTNDSIEIAVMLLREIGAYLAEVSTRAYNGVFERFRTILHEGQLERRTQFIIEVLFQTRKDKFKNNPTIPQELDLVEEEDQITHYISLDDNLDVQESLGIFHYDPDYEENEKKYDAIKHEILGEEDDDENEEDEEDSEETSESEEDESVNDEKPQVIDQTNASLVNLRKSIYLTIMSSVDFEECCHKLLKIDLPEGQEIELCNMVIECNSQERTYAKFYGLIGERFCKLSRTWRSTYEQCFKNYYETIHRYETNRLRNIALFFANLLSTDSIGWEVYDCVRLTEDDTTASSRIFLKIMFQEIVEALGLKSLVERLHDPNLVPYLHGLFPVDEARNVRFSINYFTSIGLGALTEEMREYLLTMPKSEPKEQDSEGYSSGSETGSTYSSSYSSTYSRGRSYSRSTRSYSKSRSYSRSRSVTPINNINHKKYIRKDRELSPRGRERSSNRNSYSDLSRSSSLSRGRSRSYTPEGRLIESEDKGYRSRSSSPASRKYRSRQRYRRSYAGSTSRGRSFSRSPSYRRRLSMSCSVSYSRSPSPAARPISRSPARNKRSYDSLSYNRQYSPKVSRKRSNESRSPSPYTLRKQKTYHLNKRNEDFVVKMDKKGSESPVILAPWLREVDDGELYKDRNSESDSVRKQPRAD</sequence>
<proteinExistence type="evidence at protein level"/>
<keyword id="KW-0002">3D-structure</keyword>
<keyword id="KW-0963">Cytoplasm</keyword>
<keyword id="KW-0507">mRNA processing</keyword>
<keyword id="KW-0508">mRNA splicing</keyword>
<keyword id="KW-0539">Nucleus</keyword>
<keyword id="KW-0597">Phosphoprotein</keyword>
<keyword id="KW-1185">Reference proteome</keyword>
<keyword id="KW-0747">Spliceosome</keyword>
<organism>
    <name type="scientific">Schizosaccharomyces pombe (strain 972 / ATCC 24843)</name>
    <name type="common">Fission yeast</name>
    <dbReference type="NCBI Taxonomy" id="284812"/>
    <lineage>
        <taxon>Eukaryota</taxon>
        <taxon>Fungi</taxon>
        <taxon>Dikarya</taxon>
        <taxon>Ascomycota</taxon>
        <taxon>Taphrinomycotina</taxon>
        <taxon>Schizosaccharomycetes</taxon>
        <taxon>Schizosaccharomycetales</taxon>
        <taxon>Schizosaccharomycetaceae</taxon>
        <taxon>Schizosaccharomyces</taxon>
    </lineage>
</organism>
<name>CWC22_SCHPO</name>
<reference key="1">
    <citation type="journal article" date="2002" name="Nature">
        <title>The genome sequence of Schizosaccharomyces pombe.</title>
        <authorList>
            <person name="Wood V."/>
            <person name="Gwilliam R."/>
            <person name="Rajandream M.A."/>
            <person name="Lyne M.H."/>
            <person name="Lyne R."/>
            <person name="Stewart A."/>
            <person name="Sgouros J.G."/>
            <person name="Peat N."/>
            <person name="Hayles J."/>
            <person name="Baker S.G."/>
            <person name="Basham D."/>
            <person name="Bowman S."/>
            <person name="Brooks K."/>
            <person name="Brown D."/>
            <person name="Brown S."/>
            <person name="Chillingworth T."/>
            <person name="Churcher C.M."/>
            <person name="Collins M."/>
            <person name="Connor R."/>
            <person name="Cronin A."/>
            <person name="Davis P."/>
            <person name="Feltwell T."/>
            <person name="Fraser A."/>
            <person name="Gentles S."/>
            <person name="Goble A."/>
            <person name="Hamlin N."/>
            <person name="Harris D.E."/>
            <person name="Hidalgo J."/>
            <person name="Hodgson G."/>
            <person name="Holroyd S."/>
            <person name="Hornsby T."/>
            <person name="Howarth S."/>
            <person name="Huckle E.J."/>
            <person name="Hunt S."/>
            <person name="Jagels K."/>
            <person name="James K.D."/>
            <person name="Jones L."/>
            <person name="Jones M."/>
            <person name="Leather S."/>
            <person name="McDonald S."/>
            <person name="McLean J."/>
            <person name="Mooney P."/>
            <person name="Moule S."/>
            <person name="Mungall K.L."/>
            <person name="Murphy L.D."/>
            <person name="Niblett D."/>
            <person name="Odell C."/>
            <person name="Oliver K."/>
            <person name="O'Neil S."/>
            <person name="Pearson D."/>
            <person name="Quail M.A."/>
            <person name="Rabbinowitsch E."/>
            <person name="Rutherford K.M."/>
            <person name="Rutter S."/>
            <person name="Saunders D."/>
            <person name="Seeger K."/>
            <person name="Sharp S."/>
            <person name="Skelton J."/>
            <person name="Simmonds M.N."/>
            <person name="Squares R."/>
            <person name="Squares S."/>
            <person name="Stevens K."/>
            <person name="Taylor K."/>
            <person name="Taylor R.G."/>
            <person name="Tivey A."/>
            <person name="Walsh S.V."/>
            <person name="Warren T."/>
            <person name="Whitehead S."/>
            <person name="Woodward J.R."/>
            <person name="Volckaert G."/>
            <person name="Aert R."/>
            <person name="Robben J."/>
            <person name="Grymonprez B."/>
            <person name="Weltjens I."/>
            <person name="Vanstreels E."/>
            <person name="Rieger M."/>
            <person name="Schaefer M."/>
            <person name="Mueller-Auer S."/>
            <person name="Gabel C."/>
            <person name="Fuchs M."/>
            <person name="Duesterhoeft A."/>
            <person name="Fritzc C."/>
            <person name="Holzer E."/>
            <person name="Moestl D."/>
            <person name="Hilbert H."/>
            <person name="Borzym K."/>
            <person name="Langer I."/>
            <person name="Beck A."/>
            <person name="Lehrach H."/>
            <person name="Reinhardt R."/>
            <person name="Pohl T.M."/>
            <person name="Eger P."/>
            <person name="Zimmermann W."/>
            <person name="Wedler H."/>
            <person name="Wambutt R."/>
            <person name="Purnelle B."/>
            <person name="Goffeau A."/>
            <person name="Cadieu E."/>
            <person name="Dreano S."/>
            <person name="Gloux S."/>
            <person name="Lelaure V."/>
            <person name="Mottier S."/>
            <person name="Galibert F."/>
            <person name="Aves S.J."/>
            <person name="Xiang Z."/>
            <person name="Hunt C."/>
            <person name="Moore K."/>
            <person name="Hurst S.M."/>
            <person name="Lucas M."/>
            <person name="Rochet M."/>
            <person name="Gaillardin C."/>
            <person name="Tallada V.A."/>
            <person name="Garzon A."/>
            <person name="Thode G."/>
            <person name="Daga R.R."/>
            <person name="Cruzado L."/>
            <person name="Jimenez J."/>
            <person name="Sanchez M."/>
            <person name="del Rey F."/>
            <person name="Benito J."/>
            <person name="Dominguez A."/>
            <person name="Revuelta J.L."/>
            <person name="Moreno S."/>
            <person name="Armstrong J."/>
            <person name="Forsburg S.L."/>
            <person name="Cerutti L."/>
            <person name="Lowe T."/>
            <person name="McCombie W.R."/>
            <person name="Paulsen I."/>
            <person name="Potashkin J."/>
            <person name="Shpakovski G.V."/>
            <person name="Ussery D."/>
            <person name="Barrell B.G."/>
            <person name="Nurse P."/>
        </authorList>
    </citation>
    <scope>NUCLEOTIDE SEQUENCE [LARGE SCALE GENOMIC DNA]</scope>
    <source>
        <strain>972 / ATCC 24843</strain>
    </source>
</reference>
<reference key="2">
    <citation type="journal article" date="2011" name="Science">
        <title>Comparative functional genomics of the fission yeasts.</title>
        <authorList>
            <person name="Rhind N."/>
            <person name="Chen Z."/>
            <person name="Yassour M."/>
            <person name="Thompson D.A."/>
            <person name="Haas B.J."/>
            <person name="Habib N."/>
            <person name="Wapinski I."/>
            <person name="Roy S."/>
            <person name="Lin M.F."/>
            <person name="Heiman D.I."/>
            <person name="Young S.K."/>
            <person name="Furuya K."/>
            <person name="Guo Y."/>
            <person name="Pidoux A."/>
            <person name="Chen H.M."/>
            <person name="Robbertse B."/>
            <person name="Goldberg J.M."/>
            <person name="Aoki K."/>
            <person name="Bayne E.H."/>
            <person name="Berlin A.M."/>
            <person name="Desjardins C.A."/>
            <person name="Dobbs E."/>
            <person name="Dukaj L."/>
            <person name="Fan L."/>
            <person name="FitzGerald M.G."/>
            <person name="French C."/>
            <person name="Gujja S."/>
            <person name="Hansen K."/>
            <person name="Keifenheim D."/>
            <person name="Levin J.Z."/>
            <person name="Mosher R.A."/>
            <person name="Mueller C.A."/>
            <person name="Pfiffner J."/>
            <person name="Priest M."/>
            <person name="Russ C."/>
            <person name="Smialowska A."/>
            <person name="Swoboda P."/>
            <person name="Sykes S.M."/>
            <person name="Vaughn M."/>
            <person name="Vengrova S."/>
            <person name="Yoder R."/>
            <person name="Zeng Q."/>
            <person name="Allshire R."/>
            <person name="Baulcombe D."/>
            <person name="Birren B.W."/>
            <person name="Brown W."/>
            <person name="Ekwall K."/>
            <person name="Kellis M."/>
            <person name="Leatherwood J."/>
            <person name="Levin H."/>
            <person name="Margalit H."/>
            <person name="Martienssen R."/>
            <person name="Nieduszynski C.A."/>
            <person name="Spatafora J.W."/>
            <person name="Friedman N."/>
            <person name="Dalgaard J.Z."/>
            <person name="Baumann P."/>
            <person name="Niki H."/>
            <person name="Regev A."/>
            <person name="Nusbaum C."/>
        </authorList>
    </citation>
    <scope>REVISION OF GENE MODEL</scope>
</reference>
<reference key="3">
    <citation type="journal article" date="1997" name="DNA Res.">
        <title>Identification of open reading frames in Schizosaccharomyces pombe cDNAs.</title>
        <authorList>
            <person name="Yoshioka S."/>
            <person name="Kato K."/>
            <person name="Nakai K."/>
            <person name="Okayama H."/>
            <person name="Nojima H."/>
        </authorList>
    </citation>
    <scope>NUCLEOTIDE SEQUENCE [LARGE SCALE MRNA] OF 493-887</scope>
    <source>
        <strain>PR745</strain>
    </source>
</reference>
<reference key="4">
    <citation type="journal article" date="2006" name="Nat. Biotechnol.">
        <title>ORFeome cloning and global analysis of protein localization in the fission yeast Schizosaccharomyces pombe.</title>
        <authorList>
            <person name="Matsuyama A."/>
            <person name="Arai R."/>
            <person name="Yashiroda Y."/>
            <person name="Shirai A."/>
            <person name="Kamata A."/>
            <person name="Sekido S."/>
            <person name="Kobayashi Y."/>
            <person name="Hashimoto A."/>
            <person name="Hamamoto M."/>
            <person name="Hiraoka Y."/>
            <person name="Horinouchi S."/>
            <person name="Yoshida M."/>
        </authorList>
    </citation>
    <scope>IDENTIFICATION OF FRAMESHIFT</scope>
    <source>
        <strain>972 / ATCC 24843</strain>
        <strain>JY3</strain>
    </source>
</reference>
<reference key="5">
    <citation type="journal article" date="2002" name="Mol. Cell. Biol.">
        <title>Proteomics analysis reveals stable multiprotein complexes in both fission and budding yeasts containing Myb-related Cdc5p/Cef1p, novel pre-mRNA splicing factors, and snRNAs.</title>
        <authorList>
            <person name="Ohi M.D."/>
            <person name="Link A.J."/>
            <person name="Ren L."/>
            <person name="Jennings J.L."/>
            <person name="McDonald W.H."/>
            <person name="Gould K.L."/>
        </authorList>
    </citation>
    <scope>IDENTIFICATION IN THE CWF COMPLEX</scope>
    <scope>IDENTIFICATION BY MASS SPECTROMETRY</scope>
</reference>
<reference key="6">
    <citation type="journal article" date="2008" name="J. Proteome Res.">
        <title>Phosphoproteome analysis of fission yeast.</title>
        <authorList>
            <person name="Wilson-Grady J.T."/>
            <person name="Villen J."/>
            <person name="Gygi S.P."/>
        </authorList>
    </citation>
    <scope>PHOSPHORYLATION [LARGE SCALE ANALYSIS] AT SER-662 AND THR-664</scope>
    <scope>IDENTIFICATION BY MASS SPECTROMETRY</scope>
</reference>
<reference key="7">
    <citation type="journal article" date="2011" name="Genetics">
        <title>Augmented annotation of the Schizosaccharomyces pombe genome reveals additional genes required for growth and viability.</title>
        <authorList>
            <person name="Bitton D.A."/>
            <person name="Wood V."/>
            <person name="Scutt P.J."/>
            <person name="Grallert A."/>
            <person name="Yates T."/>
            <person name="Smith D.L."/>
            <person name="Hagan I.M."/>
            <person name="Miller C.J."/>
        </authorList>
    </citation>
    <scope>IDENTIFICATION BY MASS SPECTROMETRY</scope>
</reference>
<evidence type="ECO:0000250" key="1"/>
<evidence type="ECO:0000255" key="2">
    <source>
        <dbReference type="PROSITE-ProRule" id="PRU00698"/>
    </source>
</evidence>
<evidence type="ECO:0000256" key="3">
    <source>
        <dbReference type="SAM" id="MobiDB-lite"/>
    </source>
</evidence>
<evidence type="ECO:0000269" key="4">
    <source>
    </source>
</evidence>
<evidence type="ECO:0000269" key="5">
    <source>
    </source>
</evidence>
<evidence type="ECO:0000305" key="6"/>
<evidence type="ECO:0007829" key="7">
    <source>
        <dbReference type="PDB" id="9ESH"/>
    </source>
</evidence>
<evidence type="ECO:0007829" key="8">
    <source>
        <dbReference type="PDB" id="9ESI"/>
    </source>
</evidence>
<dbReference type="EMBL" id="D89100">
    <property type="protein sequence ID" value="BAA13763.1"/>
    <property type="molecule type" value="mRNA"/>
</dbReference>
<dbReference type="EMBL" id="CU329671">
    <property type="protein sequence ID" value="CAA20491.4"/>
    <property type="status" value="ALT_FRAME"/>
    <property type="molecule type" value="Genomic_DNA"/>
</dbReference>
<dbReference type="PIR" id="T39492">
    <property type="entry name" value="T39492"/>
</dbReference>
<dbReference type="PDB" id="9ESH">
    <property type="method" value="EM"/>
    <property type="resolution" value="3.20 A"/>
    <property type="chains" value="c=1-887"/>
</dbReference>
<dbReference type="PDB" id="9ESI">
    <property type="method" value="EM"/>
    <property type="resolution" value="3.10 A"/>
    <property type="chains" value="c=1-887"/>
</dbReference>
<dbReference type="PDBsum" id="9ESH"/>
<dbReference type="PDBsum" id="9ESI"/>
<dbReference type="EMDB" id="EMD-19941"/>
<dbReference type="EMDB" id="EMD-19942"/>
<dbReference type="SMR" id="Q9P6R9"/>
<dbReference type="FunCoup" id="Q9P6R9">
    <property type="interactions" value="915"/>
</dbReference>
<dbReference type="IntAct" id="Q9P6R9">
    <property type="interactions" value="3"/>
</dbReference>
<dbReference type="STRING" id="284812.Q9P6R9"/>
<dbReference type="iPTMnet" id="Q9P6R9"/>
<dbReference type="PaxDb" id="4896-SPBC13E7.01.1"/>
<dbReference type="PomBase" id="SPBC13E7.01">
    <property type="gene designation" value="cwf22"/>
</dbReference>
<dbReference type="eggNOG" id="KOG2140">
    <property type="taxonomic scope" value="Eukaryota"/>
</dbReference>
<dbReference type="HOGENOM" id="CLU_006308_0_2_1"/>
<dbReference type="InParanoid" id="Q9P6R9"/>
<dbReference type="PhylomeDB" id="Q9P6R9"/>
<dbReference type="Reactome" id="R-SPO-72163">
    <property type="pathway name" value="mRNA Splicing - Major Pathway"/>
</dbReference>
<dbReference type="PRO" id="PR:Q9P6R9"/>
<dbReference type="Proteomes" id="UP000002485">
    <property type="component" value="Chromosome II"/>
</dbReference>
<dbReference type="GO" id="GO:0071013">
    <property type="term" value="C:catalytic step 2 spliceosome"/>
    <property type="evidence" value="ECO:0000318"/>
    <property type="project" value="GO_Central"/>
</dbReference>
<dbReference type="GO" id="GO:0005737">
    <property type="term" value="C:cytoplasm"/>
    <property type="evidence" value="ECO:0007669"/>
    <property type="project" value="UniProtKB-SubCell"/>
</dbReference>
<dbReference type="GO" id="GO:0000974">
    <property type="term" value="C:Prp19 complex"/>
    <property type="evidence" value="ECO:0000314"/>
    <property type="project" value="PomBase"/>
</dbReference>
<dbReference type="GO" id="GO:0005684">
    <property type="term" value="C:U2-type spliceosomal complex"/>
    <property type="evidence" value="ECO:0000314"/>
    <property type="project" value="PomBase"/>
</dbReference>
<dbReference type="GO" id="GO:0003723">
    <property type="term" value="F:RNA binding"/>
    <property type="evidence" value="ECO:0000318"/>
    <property type="project" value="GO_Central"/>
</dbReference>
<dbReference type="GO" id="GO:0045292">
    <property type="term" value="P:mRNA cis splicing, via spliceosome"/>
    <property type="evidence" value="ECO:0000269"/>
    <property type="project" value="PomBase"/>
</dbReference>
<dbReference type="GO" id="GO:0000398">
    <property type="term" value="P:mRNA splicing, via spliceosome"/>
    <property type="evidence" value="ECO:0000318"/>
    <property type="project" value="GO_Central"/>
</dbReference>
<dbReference type="FunFam" id="1.25.40.180:FF:000004">
    <property type="entry name" value="pre-mRNA-splicing factor CWC22 homolog"/>
    <property type="match status" value="1"/>
</dbReference>
<dbReference type="Gene3D" id="1.25.40.180">
    <property type="match status" value="1"/>
</dbReference>
<dbReference type="InterPro" id="IPR016024">
    <property type="entry name" value="ARM-type_fold"/>
</dbReference>
<dbReference type="InterPro" id="IPR050781">
    <property type="entry name" value="CWC22_splicing_factor"/>
</dbReference>
<dbReference type="InterPro" id="IPR003891">
    <property type="entry name" value="Initiation_fac_eIF4g_MI"/>
</dbReference>
<dbReference type="InterPro" id="IPR003890">
    <property type="entry name" value="MIF4G-like_typ-3"/>
</dbReference>
<dbReference type="PANTHER" id="PTHR18034">
    <property type="entry name" value="CELL CYCLE CONTROL PROTEIN CWF22-RELATED"/>
    <property type="match status" value="1"/>
</dbReference>
<dbReference type="PANTHER" id="PTHR18034:SF3">
    <property type="entry name" value="PRE-MRNA-SPLICING FACTOR CWC22 HOMOLOG"/>
    <property type="match status" value="1"/>
</dbReference>
<dbReference type="Pfam" id="PF02847">
    <property type="entry name" value="MA3"/>
    <property type="match status" value="1"/>
</dbReference>
<dbReference type="Pfam" id="PF02854">
    <property type="entry name" value="MIF4G"/>
    <property type="match status" value="1"/>
</dbReference>
<dbReference type="SMART" id="SM00544">
    <property type="entry name" value="MA3"/>
    <property type="match status" value="1"/>
</dbReference>
<dbReference type="SMART" id="SM00543">
    <property type="entry name" value="MIF4G"/>
    <property type="match status" value="1"/>
</dbReference>
<dbReference type="SUPFAM" id="SSF48371">
    <property type="entry name" value="ARM repeat"/>
    <property type="match status" value="1"/>
</dbReference>
<dbReference type="PROSITE" id="PS51366">
    <property type="entry name" value="MI"/>
    <property type="match status" value="1"/>
</dbReference>